<evidence type="ECO:0000255" key="1">
    <source>
        <dbReference type="HAMAP-Rule" id="MF_00048"/>
    </source>
</evidence>
<organism>
    <name type="scientific">Sulfurihydrogenibium sp. (strain YO3AOP1)</name>
    <dbReference type="NCBI Taxonomy" id="436114"/>
    <lineage>
        <taxon>Bacteria</taxon>
        <taxon>Pseudomonadati</taxon>
        <taxon>Aquificota</taxon>
        <taxon>Aquificia</taxon>
        <taxon>Aquificales</taxon>
        <taxon>Hydrogenothermaceae</taxon>
        <taxon>Sulfurihydrogenibium</taxon>
    </lineage>
</organism>
<protein>
    <recommendedName>
        <fullName evidence="1">UPF0102 protein SYO3AOP1_0546</fullName>
    </recommendedName>
</protein>
<reference key="1">
    <citation type="journal article" date="2009" name="J. Bacteriol.">
        <title>Complete and draft genome sequences of six members of the Aquificales.</title>
        <authorList>
            <person name="Reysenbach A.-L."/>
            <person name="Hamamura N."/>
            <person name="Podar M."/>
            <person name="Griffiths E."/>
            <person name="Ferreira S."/>
            <person name="Hochstein R."/>
            <person name="Heidelberg J."/>
            <person name="Johnson J."/>
            <person name="Mead D."/>
            <person name="Pohorille A."/>
            <person name="Sarmiento M."/>
            <person name="Schweighofer K."/>
            <person name="Seshadri R."/>
            <person name="Voytek M.A."/>
        </authorList>
    </citation>
    <scope>NUCLEOTIDE SEQUENCE [LARGE SCALE GENOMIC DNA]</scope>
    <source>
        <strain>YO3AOP1</strain>
    </source>
</reference>
<comment type="similarity">
    <text evidence="1">Belongs to the UPF0102 family.</text>
</comment>
<dbReference type="EMBL" id="CP001080">
    <property type="protein sequence ID" value="ACD66186.1"/>
    <property type="molecule type" value="Genomic_DNA"/>
</dbReference>
<dbReference type="RefSeq" id="WP_012459267.1">
    <property type="nucleotide sequence ID" value="NC_010730.1"/>
</dbReference>
<dbReference type="SMR" id="B2V8B3"/>
<dbReference type="STRING" id="436114.SYO3AOP1_0546"/>
<dbReference type="KEGG" id="sul:SYO3AOP1_0546"/>
<dbReference type="eggNOG" id="COG0792">
    <property type="taxonomic scope" value="Bacteria"/>
</dbReference>
<dbReference type="HOGENOM" id="CLU_115353_3_1_0"/>
<dbReference type="GO" id="GO:0003676">
    <property type="term" value="F:nucleic acid binding"/>
    <property type="evidence" value="ECO:0007669"/>
    <property type="project" value="InterPro"/>
</dbReference>
<dbReference type="CDD" id="cd20736">
    <property type="entry name" value="PoNe_Nuclease"/>
    <property type="match status" value="1"/>
</dbReference>
<dbReference type="Gene3D" id="3.40.1350.10">
    <property type="match status" value="1"/>
</dbReference>
<dbReference type="HAMAP" id="MF_00048">
    <property type="entry name" value="UPF0102"/>
    <property type="match status" value="1"/>
</dbReference>
<dbReference type="InterPro" id="IPR011335">
    <property type="entry name" value="Restrct_endonuc-II-like"/>
</dbReference>
<dbReference type="InterPro" id="IPR011856">
    <property type="entry name" value="tRNA_endonuc-like_dom_sf"/>
</dbReference>
<dbReference type="InterPro" id="IPR003509">
    <property type="entry name" value="UPF0102_YraN-like"/>
</dbReference>
<dbReference type="NCBIfam" id="NF009150">
    <property type="entry name" value="PRK12497.1-3"/>
    <property type="match status" value="1"/>
</dbReference>
<dbReference type="NCBIfam" id="TIGR00252">
    <property type="entry name" value="YraN family protein"/>
    <property type="match status" value="1"/>
</dbReference>
<dbReference type="PANTHER" id="PTHR34039">
    <property type="entry name" value="UPF0102 PROTEIN YRAN"/>
    <property type="match status" value="1"/>
</dbReference>
<dbReference type="PANTHER" id="PTHR34039:SF1">
    <property type="entry name" value="UPF0102 PROTEIN YRAN"/>
    <property type="match status" value="1"/>
</dbReference>
<dbReference type="Pfam" id="PF02021">
    <property type="entry name" value="UPF0102"/>
    <property type="match status" value="1"/>
</dbReference>
<dbReference type="SUPFAM" id="SSF52980">
    <property type="entry name" value="Restriction endonuclease-like"/>
    <property type="match status" value="1"/>
</dbReference>
<feature type="chain" id="PRO_1000091268" description="UPF0102 protein SYO3AOP1_0546">
    <location>
        <begin position="1"/>
        <end position="115"/>
    </location>
</feature>
<proteinExistence type="inferred from homology"/>
<sequence>MDKTQKGKFFEDKAVRYLESIGYKVLHKNYRSKYGEIDIIAETDNVIVFVEVKGRFTENFGSGEESITKKKIDKIVKTALQFIEENNLQGKDFRFDVVALKGNQIFHLENAFSLE</sequence>
<gene>
    <name type="ordered locus">SYO3AOP1_0546</name>
</gene>
<accession>B2V8B3</accession>
<name>Y546_SULSY</name>